<proteinExistence type="inferred from homology"/>
<name>DAPB_STAA3</name>
<dbReference type="EC" id="1.17.1.8" evidence="1"/>
<dbReference type="EMBL" id="CP000255">
    <property type="protein sequence ID" value="ABD22356.1"/>
    <property type="molecule type" value="Genomic_DNA"/>
</dbReference>
<dbReference type="RefSeq" id="WP_000698235.1">
    <property type="nucleotide sequence ID" value="NZ_CP027476.1"/>
</dbReference>
<dbReference type="SMR" id="Q2FH42"/>
<dbReference type="KEGG" id="saa:SAUSA300_1289"/>
<dbReference type="HOGENOM" id="CLU_047479_2_2_9"/>
<dbReference type="OMA" id="FWSANMS"/>
<dbReference type="UniPathway" id="UPA00034">
    <property type="reaction ID" value="UER00018"/>
</dbReference>
<dbReference type="Proteomes" id="UP000001939">
    <property type="component" value="Chromosome"/>
</dbReference>
<dbReference type="GO" id="GO:0005829">
    <property type="term" value="C:cytosol"/>
    <property type="evidence" value="ECO:0007669"/>
    <property type="project" value="TreeGrafter"/>
</dbReference>
<dbReference type="GO" id="GO:0008839">
    <property type="term" value="F:4-hydroxy-tetrahydrodipicolinate reductase"/>
    <property type="evidence" value="ECO:0007669"/>
    <property type="project" value="UniProtKB-EC"/>
</dbReference>
<dbReference type="GO" id="GO:0051287">
    <property type="term" value="F:NAD binding"/>
    <property type="evidence" value="ECO:0007669"/>
    <property type="project" value="UniProtKB-UniRule"/>
</dbReference>
<dbReference type="GO" id="GO:0050661">
    <property type="term" value="F:NADP binding"/>
    <property type="evidence" value="ECO:0007669"/>
    <property type="project" value="UniProtKB-UniRule"/>
</dbReference>
<dbReference type="GO" id="GO:0016726">
    <property type="term" value="F:oxidoreductase activity, acting on CH or CH2 groups, NAD or NADP as acceptor"/>
    <property type="evidence" value="ECO:0007669"/>
    <property type="project" value="UniProtKB-UniRule"/>
</dbReference>
<dbReference type="GO" id="GO:0019877">
    <property type="term" value="P:diaminopimelate biosynthetic process"/>
    <property type="evidence" value="ECO:0007669"/>
    <property type="project" value="UniProtKB-UniRule"/>
</dbReference>
<dbReference type="GO" id="GO:0009089">
    <property type="term" value="P:lysine biosynthetic process via diaminopimelate"/>
    <property type="evidence" value="ECO:0007669"/>
    <property type="project" value="UniProtKB-UniRule"/>
</dbReference>
<dbReference type="CDD" id="cd02274">
    <property type="entry name" value="DHDPR_N"/>
    <property type="match status" value="1"/>
</dbReference>
<dbReference type="FunFam" id="3.30.360.10:FF:000009">
    <property type="entry name" value="4-hydroxy-tetrahydrodipicolinate reductase"/>
    <property type="match status" value="1"/>
</dbReference>
<dbReference type="Gene3D" id="3.30.360.10">
    <property type="entry name" value="Dihydrodipicolinate Reductase, domain 2"/>
    <property type="match status" value="1"/>
</dbReference>
<dbReference type="Gene3D" id="3.40.50.720">
    <property type="entry name" value="NAD(P)-binding Rossmann-like Domain"/>
    <property type="match status" value="1"/>
</dbReference>
<dbReference type="HAMAP" id="MF_00102">
    <property type="entry name" value="DapB"/>
    <property type="match status" value="1"/>
</dbReference>
<dbReference type="InterPro" id="IPR022663">
    <property type="entry name" value="DapB_C"/>
</dbReference>
<dbReference type="InterPro" id="IPR000846">
    <property type="entry name" value="DapB_N"/>
</dbReference>
<dbReference type="InterPro" id="IPR022664">
    <property type="entry name" value="DapB_N_CS"/>
</dbReference>
<dbReference type="InterPro" id="IPR023940">
    <property type="entry name" value="DHDPR_bac"/>
</dbReference>
<dbReference type="InterPro" id="IPR036291">
    <property type="entry name" value="NAD(P)-bd_dom_sf"/>
</dbReference>
<dbReference type="NCBIfam" id="TIGR00036">
    <property type="entry name" value="dapB"/>
    <property type="match status" value="1"/>
</dbReference>
<dbReference type="PANTHER" id="PTHR20836:SF7">
    <property type="entry name" value="4-HYDROXY-TETRAHYDRODIPICOLINATE REDUCTASE"/>
    <property type="match status" value="1"/>
</dbReference>
<dbReference type="PANTHER" id="PTHR20836">
    <property type="entry name" value="DIHYDRODIPICOLINATE REDUCTASE"/>
    <property type="match status" value="1"/>
</dbReference>
<dbReference type="Pfam" id="PF05173">
    <property type="entry name" value="DapB_C"/>
    <property type="match status" value="1"/>
</dbReference>
<dbReference type="Pfam" id="PF01113">
    <property type="entry name" value="DapB_N"/>
    <property type="match status" value="1"/>
</dbReference>
<dbReference type="PIRSF" id="PIRSF000161">
    <property type="entry name" value="DHPR"/>
    <property type="match status" value="1"/>
</dbReference>
<dbReference type="SUPFAM" id="SSF55347">
    <property type="entry name" value="Glyceraldehyde-3-phosphate dehydrogenase-like, C-terminal domain"/>
    <property type="match status" value="1"/>
</dbReference>
<dbReference type="SUPFAM" id="SSF51735">
    <property type="entry name" value="NAD(P)-binding Rossmann-fold domains"/>
    <property type="match status" value="1"/>
</dbReference>
<dbReference type="PROSITE" id="PS01298">
    <property type="entry name" value="DAPB"/>
    <property type="match status" value="1"/>
</dbReference>
<organism>
    <name type="scientific">Staphylococcus aureus (strain USA300)</name>
    <dbReference type="NCBI Taxonomy" id="367830"/>
    <lineage>
        <taxon>Bacteria</taxon>
        <taxon>Bacillati</taxon>
        <taxon>Bacillota</taxon>
        <taxon>Bacilli</taxon>
        <taxon>Bacillales</taxon>
        <taxon>Staphylococcaceae</taxon>
        <taxon>Staphylococcus</taxon>
    </lineage>
</organism>
<gene>
    <name evidence="1" type="primary">dapB</name>
    <name type="ordered locus">SAUSA300_1289</name>
</gene>
<keyword id="KW-0028">Amino-acid biosynthesis</keyword>
<keyword id="KW-0963">Cytoplasm</keyword>
<keyword id="KW-0220">Diaminopimelate biosynthesis</keyword>
<keyword id="KW-0457">Lysine biosynthesis</keyword>
<keyword id="KW-0520">NAD</keyword>
<keyword id="KW-0521">NADP</keyword>
<keyword id="KW-0560">Oxidoreductase</keyword>
<reference key="1">
    <citation type="journal article" date="2006" name="Lancet">
        <title>Complete genome sequence of USA300, an epidemic clone of community-acquired meticillin-resistant Staphylococcus aureus.</title>
        <authorList>
            <person name="Diep B.A."/>
            <person name="Gill S.R."/>
            <person name="Chang R.F."/>
            <person name="Phan T.H."/>
            <person name="Chen J.H."/>
            <person name="Davidson M.G."/>
            <person name="Lin F."/>
            <person name="Lin J."/>
            <person name="Carleton H.A."/>
            <person name="Mongodin E.F."/>
            <person name="Sensabaugh G.F."/>
            <person name="Perdreau-Remington F."/>
        </authorList>
    </citation>
    <scope>NUCLEOTIDE SEQUENCE [LARGE SCALE GENOMIC DNA]</scope>
    <source>
        <strain>USA300</strain>
    </source>
</reference>
<feature type="chain" id="PRO_1000094005" description="4-hydroxy-tetrahydrodipicolinate reductase">
    <location>
        <begin position="1"/>
        <end position="240"/>
    </location>
</feature>
<feature type="active site" description="Proton donor/acceptor" evidence="1">
    <location>
        <position position="135"/>
    </location>
</feature>
<feature type="active site" description="Proton donor" evidence="1">
    <location>
        <position position="139"/>
    </location>
</feature>
<feature type="binding site" evidence="1">
    <location>
        <begin position="79"/>
        <end position="81"/>
    </location>
    <ligand>
        <name>NAD(+)</name>
        <dbReference type="ChEBI" id="CHEBI:57540"/>
    </ligand>
</feature>
<feature type="binding site" evidence="1">
    <location>
        <begin position="103"/>
        <end position="106"/>
    </location>
    <ligand>
        <name>NAD(+)</name>
        <dbReference type="ChEBI" id="CHEBI:57540"/>
    </ligand>
</feature>
<feature type="binding site" evidence="1">
    <location>
        <position position="136"/>
    </location>
    <ligand>
        <name>(S)-2,3,4,5-tetrahydrodipicolinate</name>
        <dbReference type="ChEBI" id="CHEBI:16845"/>
    </ligand>
</feature>
<feature type="binding site" evidence="1">
    <location>
        <begin position="145"/>
        <end position="146"/>
    </location>
    <ligand>
        <name>(S)-2,3,4,5-tetrahydrodipicolinate</name>
        <dbReference type="ChEBI" id="CHEBI:16845"/>
    </ligand>
</feature>
<accession>Q2FH42</accession>
<comment type="function">
    <text evidence="1">Catalyzes the conversion of 4-hydroxy-tetrahydrodipicolinate (HTPA) to tetrahydrodipicolinate.</text>
</comment>
<comment type="catalytic activity">
    <reaction evidence="1">
        <text>(S)-2,3,4,5-tetrahydrodipicolinate + NAD(+) + H2O = (2S,4S)-4-hydroxy-2,3,4,5-tetrahydrodipicolinate + NADH + H(+)</text>
        <dbReference type="Rhea" id="RHEA:35323"/>
        <dbReference type="ChEBI" id="CHEBI:15377"/>
        <dbReference type="ChEBI" id="CHEBI:15378"/>
        <dbReference type="ChEBI" id="CHEBI:16845"/>
        <dbReference type="ChEBI" id="CHEBI:57540"/>
        <dbReference type="ChEBI" id="CHEBI:57945"/>
        <dbReference type="ChEBI" id="CHEBI:67139"/>
        <dbReference type="EC" id="1.17.1.8"/>
    </reaction>
</comment>
<comment type="catalytic activity">
    <reaction evidence="1">
        <text>(S)-2,3,4,5-tetrahydrodipicolinate + NADP(+) + H2O = (2S,4S)-4-hydroxy-2,3,4,5-tetrahydrodipicolinate + NADPH + H(+)</text>
        <dbReference type="Rhea" id="RHEA:35331"/>
        <dbReference type="ChEBI" id="CHEBI:15377"/>
        <dbReference type="ChEBI" id="CHEBI:15378"/>
        <dbReference type="ChEBI" id="CHEBI:16845"/>
        <dbReference type="ChEBI" id="CHEBI:57783"/>
        <dbReference type="ChEBI" id="CHEBI:58349"/>
        <dbReference type="ChEBI" id="CHEBI:67139"/>
        <dbReference type="EC" id="1.17.1.8"/>
    </reaction>
</comment>
<comment type="pathway">
    <text evidence="1">Amino-acid biosynthesis; L-lysine biosynthesis via DAP pathway; (S)-tetrahydrodipicolinate from L-aspartate: step 4/4.</text>
</comment>
<comment type="subcellular location">
    <subcellularLocation>
        <location evidence="1">Cytoplasm</location>
    </subcellularLocation>
</comment>
<comment type="similarity">
    <text evidence="1">Belongs to the DapB family.</text>
</comment>
<comment type="caution">
    <text evidence="2">Was originally thought to be a dihydrodipicolinate reductase (DHDPR), catalyzing the conversion of dihydrodipicolinate to tetrahydrodipicolinate. However, it was shown in E.coli that the substrate of the enzymatic reaction is not dihydrodipicolinate (DHDP) but in fact (2S,4S)-4-hydroxy-2,3,4,5-tetrahydrodipicolinic acid (HTPA), the product released by the DapA-catalyzed reaction.</text>
</comment>
<sequence length="240" mass="26654">MKILLIGYGAMNQRVARLAEEKGHEIVGVIENTPKATTPYQQYQHIADVKGADVAIDFSNPNLLFPLLDEDFHLPLVVATTGEKEKLLNKLDELSQNMPVFFSANMSYGVHALTKILAAAVPLLDDFDIELTEAHHNKKVDAPSGTLEKLYDVIVSLKENVTPVYDRHELNEKRQPQDIGIHSIRGGTIVGEHEVLFAGTDETIQITHRAQSKDIFANGAIQAAERLVNKPNGFYTFDNL</sequence>
<evidence type="ECO:0000255" key="1">
    <source>
        <dbReference type="HAMAP-Rule" id="MF_00102"/>
    </source>
</evidence>
<evidence type="ECO:0000305" key="2"/>
<protein>
    <recommendedName>
        <fullName evidence="1">4-hydroxy-tetrahydrodipicolinate reductase</fullName>
        <shortName evidence="1">HTPA reductase</shortName>
        <ecNumber evidence="1">1.17.1.8</ecNumber>
    </recommendedName>
</protein>